<comment type="function">
    <text evidence="1">Catalyzes the reduction of saturated and unsaturated C16 or C18 fatty acyl-CoA to fatty alcohols. It plays an essential role in the production of ether lipids/plasmalogens which synthesis requires fatty alcohols. In parallel, it is also required for wax monoesters production since fatty alcohols also constitute a substrate for their synthesis.</text>
</comment>
<comment type="catalytic activity">
    <reaction evidence="1">
        <text>a long-chain fatty acyl-CoA + 2 NADPH + 2 H(+) = a long-chain primary fatty alcohol + 2 NADP(+) + CoA</text>
        <dbReference type="Rhea" id="RHEA:52716"/>
        <dbReference type="ChEBI" id="CHEBI:15378"/>
        <dbReference type="ChEBI" id="CHEBI:57287"/>
        <dbReference type="ChEBI" id="CHEBI:57783"/>
        <dbReference type="ChEBI" id="CHEBI:58349"/>
        <dbReference type="ChEBI" id="CHEBI:77396"/>
        <dbReference type="ChEBI" id="CHEBI:83139"/>
        <dbReference type="EC" id="1.2.1.84"/>
    </reaction>
    <physiologicalReaction direction="left-to-right" evidence="1">
        <dbReference type="Rhea" id="RHEA:52717"/>
    </physiologicalReaction>
</comment>
<comment type="catalytic activity">
    <reaction evidence="1">
        <text>hexadecanoyl-CoA + 2 NADPH + 2 H(+) = hexadecan-1-ol + 2 NADP(+) + CoA</text>
        <dbReference type="Rhea" id="RHEA:36315"/>
        <dbReference type="ChEBI" id="CHEBI:15378"/>
        <dbReference type="ChEBI" id="CHEBI:16125"/>
        <dbReference type="ChEBI" id="CHEBI:57287"/>
        <dbReference type="ChEBI" id="CHEBI:57379"/>
        <dbReference type="ChEBI" id="CHEBI:57783"/>
        <dbReference type="ChEBI" id="CHEBI:58349"/>
        <dbReference type="EC" id="1.2.1.84"/>
    </reaction>
    <physiologicalReaction direction="left-to-right" evidence="1">
        <dbReference type="Rhea" id="RHEA:36316"/>
    </physiologicalReaction>
</comment>
<comment type="catalytic activity">
    <reaction evidence="2">
        <text>octadecanoyl-CoA + 2 NADPH + 2 H(+) = octadecan-1-ol + 2 NADP(+) + CoA</text>
        <dbReference type="Rhea" id="RHEA:36319"/>
        <dbReference type="ChEBI" id="CHEBI:15378"/>
        <dbReference type="ChEBI" id="CHEBI:32154"/>
        <dbReference type="ChEBI" id="CHEBI:57287"/>
        <dbReference type="ChEBI" id="CHEBI:57394"/>
        <dbReference type="ChEBI" id="CHEBI:57783"/>
        <dbReference type="ChEBI" id="CHEBI:58349"/>
        <dbReference type="EC" id="1.2.1.84"/>
    </reaction>
    <physiologicalReaction direction="left-to-right" evidence="2">
        <dbReference type="Rhea" id="RHEA:36320"/>
    </physiologicalReaction>
</comment>
<comment type="catalytic activity">
    <reaction evidence="2">
        <text>(9Z)-octadecenoyl-CoA + 2 NADPH + 2 H(+) = (9Z)-octadecen-1-ol + 2 NADP(+) + CoA</text>
        <dbReference type="Rhea" id="RHEA:36323"/>
        <dbReference type="ChEBI" id="CHEBI:15378"/>
        <dbReference type="ChEBI" id="CHEBI:57287"/>
        <dbReference type="ChEBI" id="CHEBI:57387"/>
        <dbReference type="ChEBI" id="CHEBI:57783"/>
        <dbReference type="ChEBI" id="CHEBI:58349"/>
        <dbReference type="ChEBI" id="CHEBI:73504"/>
    </reaction>
    <physiologicalReaction direction="left-to-right" evidence="2">
        <dbReference type="Rhea" id="RHEA:36324"/>
    </physiologicalReaction>
</comment>
<comment type="catalytic activity">
    <reaction evidence="2">
        <text>(9Z,12Z)-octadecadienoyl-CoA + 2 NADPH + 2 H(+) = (9Z,12Z)-octadecadien-1-ol + 2 NADP(+) + CoA</text>
        <dbReference type="Rhea" id="RHEA:36363"/>
        <dbReference type="ChEBI" id="CHEBI:15378"/>
        <dbReference type="ChEBI" id="CHEBI:57287"/>
        <dbReference type="ChEBI" id="CHEBI:57383"/>
        <dbReference type="ChEBI" id="CHEBI:57783"/>
        <dbReference type="ChEBI" id="CHEBI:58349"/>
        <dbReference type="ChEBI" id="CHEBI:73534"/>
    </reaction>
    <physiologicalReaction direction="left-to-right" evidence="2">
        <dbReference type="Rhea" id="RHEA:36364"/>
    </physiologicalReaction>
</comment>
<comment type="catalytic activity">
    <reaction evidence="1">
        <text>eicosanoyl-CoA + 2 NADPH + 2 H(+) = eicosan-1-ol + 2 NADP(+) + CoA</text>
        <dbReference type="Rhea" id="RHEA:81727"/>
        <dbReference type="ChEBI" id="CHEBI:15378"/>
        <dbReference type="ChEBI" id="CHEBI:57287"/>
        <dbReference type="ChEBI" id="CHEBI:57380"/>
        <dbReference type="ChEBI" id="CHEBI:57783"/>
        <dbReference type="ChEBI" id="CHEBI:58349"/>
        <dbReference type="ChEBI" id="CHEBI:75627"/>
    </reaction>
    <physiologicalReaction direction="left-to-right" evidence="1">
        <dbReference type="Rhea" id="RHEA:81728"/>
    </physiologicalReaction>
</comment>
<comment type="catalytic activity">
    <reaction evidence="1">
        <text>16-methylheptadecanoyl-CoA + 2 NADPH + 2 H(+) = 16-methylheptadecan-1-ol + 2 NADP(+) + CoA</text>
        <dbReference type="Rhea" id="RHEA:81763"/>
        <dbReference type="ChEBI" id="CHEBI:15378"/>
        <dbReference type="ChEBI" id="CHEBI:57287"/>
        <dbReference type="ChEBI" id="CHEBI:57783"/>
        <dbReference type="ChEBI" id="CHEBI:58349"/>
        <dbReference type="ChEBI" id="CHEBI:84911"/>
        <dbReference type="ChEBI" id="CHEBI:231998"/>
    </reaction>
    <physiologicalReaction direction="left-to-right" evidence="1">
        <dbReference type="Rhea" id="RHEA:81764"/>
    </physiologicalReaction>
</comment>
<comment type="catalytic activity">
    <reaction evidence="1">
        <text>18-methylnonadecanoyl-CoA + 2 NADPH + 2 H(+) = 18-methylnonadecan-1-ol + 2 NADP(+) + CoA</text>
        <dbReference type="Rhea" id="RHEA:81767"/>
        <dbReference type="ChEBI" id="CHEBI:15378"/>
        <dbReference type="ChEBI" id="CHEBI:57287"/>
        <dbReference type="ChEBI" id="CHEBI:57783"/>
        <dbReference type="ChEBI" id="CHEBI:58349"/>
        <dbReference type="ChEBI" id="CHEBI:84914"/>
        <dbReference type="ChEBI" id="CHEBI:231999"/>
    </reaction>
    <physiologicalReaction direction="left-to-right" evidence="1">
        <dbReference type="Rhea" id="RHEA:81768"/>
    </physiologicalReaction>
</comment>
<comment type="subcellular location">
    <subcellularLocation>
        <location evidence="1">Peroxisome membrane</location>
        <topology evidence="1">Single-pass membrane protein</topology>
    </subcellularLocation>
</comment>
<comment type="similarity">
    <text evidence="4">Belongs to the fatty acyl-CoA reductase family.</text>
</comment>
<sequence length="515" mass="59316">MLSIPEFYQGKNVLITGATGFMGKVLLEKLLRSCPNTKAVYVLVRHKAGQKPRERVAEMMSCKLFDKLRDEQPDCAQKVIAISSELTQPELDMSKEDQDTLIDCIDIVFHCAATVRFNESLRDAMQLNVIATRQLLYLAQKMKKLEVFIHVSTAYANCNRKQIEEVVYPPPVDPKKLIESLEWMDDSLVNDITPKLIGDRPNTYTYTKALAEYVVQQEGSKLNIAIVRPSIVGASWKEPFPGWIDNFNGPSGLFIAAGKGILRTMRASNNAVADLIPVDVVVNTTLAAAWYSGVNRPKNMLVYNCTTGGTNPFHWGEVEYHVISTFKRNPLEQAFRRPNVNLTSNHLLYHYWIAVSHKAPALLYDVYLRITGRSPRMMKTITRLHRAMMLLEYFTSNSWVWNNENTNMLMSQLSPEDKKVFNFDVRQLHWAEYMENYCMGTKKYVLNEEMSGLPAARKHLNKLRNIRYGFNTILVVLIWRVFIARSQMARNIWYFVVSMCFKFLSYFRASSTMRY</sequence>
<name>FACR1_XENLA</name>
<feature type="chain" id="PRO_0000261399" description="Fatty acyl-CoA reductase 1">
    <location>
        <begin position="1"/>
        <end position="515"/>
    </location>
</feature>
<feature type="topological domain" description="Cytoplasmic" evidence="1">
    <location>
        <begin position="1"/>
        <end position="465"/>
    </location>
</feature>
<feature type="transmembrane region" description="Helical" evidence="3">
    <location>
        <begin position="466"/>
        <end position="484"/>
    </location>
</feature>
<feature type="topological domain" description="Peroxisomal" evidence="1">
    <location>
        <begin position="485"/>
        <end position="515"/>
    </location>
</feature>
<evidence type="ECO:0000250" key="1">
    <source>
        <dbReference type="UniProtKB" id="Q8WVX9"/>
    </source>
</evidence>
<evidence type="ECO:0000250" key="2">
    <source>
        <dbReference type="UniProtKB" id="Q922J9"/>
    </source>
</evidence>
<evidence type="ECO:0000255" key="3"/>
<evidence type="ECO:0000305" key="4"/>
<reference key="1">
    <citation type="submission" date="2003-01" db="EMBL/GenBank/DDBJ databases">
        <authorList>
            <consortium name="NIH - Xenopus Gene Collection (XGC) project"/>
        </authorList>
    </citation>
    <scope>NUCLEOTIDE SEQUENCE [LARGE SCALE MRNA]</scope>
    <source>
        <tissue>Embryo</tissue>
    </source>
</reference>
<organism>
    <name type="scientific">Xenopus laevis</name>
    <name type="common">African clawed frog</name>
    <dbReference type="NCBI Taxonomy" id="8355"/>
    <lineage>
        <taxon>Eukaryota</taxon>
        <taxon>Metazoa</taxon>
        <taxon>Chordata</taxon>
        <taxon>Craniata</taxon>
        <taxon>Vertebrata</taxon>
        <taxon>Euteleostomi</taxon>
        <taxon>Amphibia</taxon>
        <taxon>Batrachia</taxon>
        <taxon>Anura</taxon>
        <taxon>Pipoidea</taxon>
        <taxon>Pipidae</taxon>
        <taxon>Xenopodinae</taxon>
        <taxon>Xenopus</taxon>
        <taxon>Xenopus</taxon>
    </lineage>
</organism>
<dbReference type="EC" id="1.2.1.84" evidence="1"/>
<dbReference type="EMBL" id="BC045017">
    <property type="protein sequence ID" value="AAH45017.1"/>
    <property type="molecule type" value="mRNA"/>
</dbReference>
<dbReference type="RefSeq" id="NP_001079591.1">
    <property type="nucleotide sequence ID" value="NM_001086122.1"/>
</dbReference>
<dbReference type="SMR" id="Q7ZXF5"/>
<dbReference type="DNASU" id="379278"/>
<dbReference type="GeneID" id="379278"/>
<dbReference type="KEGG" id="xla:379278"/>
<dbReference type="AGR" id="Xenbase:XB-GENE-973782"/>
<dbReference type="CTD" id="379278"/>
<dbReference type="Xenbase" id="XB-GENE-973782">
    <property type="gene designation" value="far1.L"/>
</dbReference>
<dbReference type="OMA" id="NLMLHYW"/>
<dbReference type="OrthoDB" id="429813at2759"/>
<dbReference type="Proteomes" id="UP000186698">
    <property type="component" value="Chromosome 4L"/>
</dbReference>
<dbReference type="Bgee" id="379278">
    <property type="expression patterns" value="Expressed in ovary and 19 other cell types or tissues"/>
</dbReference>
<dbReference type="GO" id="GO:0005778">
    <property type="term" value="C:peroxisomal membrane"/>
    <property type="evidence" value="ECO:0000250"/>
    <property type="project" value="UniProtKB"/>
</dbReference>
<dbReference type="GO" id="GO:0005777">
    <property type="term" value="C:peroxisome"/>
    <property type="evidence" value="ECO:0000318"/>
    <property type="project" value="GO_Central"/>
</dbReference>
<dbReference type="GO" id="GO:0102965">
    <property type="term" value="F:alcohol-forming long-chain fatty acyl-CoA reductase activity"/>
    <property type="evidence" value="ECO:0000250"/>
    <property type="project" value="UniProtKB"/>
</dbReference>
<dbReference type="GO" id="GO:0080019">
    <property type="term" value="F:alcohol-forming very long-chain fatty acyl-CoA reductase activity"/>
    <property type="evidence" value="ECO:0000318"/>
    <property type="project" value="GO_Central"/>
</dbReference>
<dbReference type="GO" id="GO:0008611">
    <property type="term" value="P:ether lipid biosynthetic process"/>
    <property type="evidence" value="ECO:0000250"/>
    <property type="project" value="UniProtKB"/>
</dbReference>
<dbReference type="GO" id="GO:0035336">
    <property type="term" value="P:long-chain fatty-acyl-CoA metabolic process"/>
    <property type="evidence" value="ECO:0000318"/>
    <property type="project" value="GO_Central"/>
</dbReference>
<dbReference type="GO" id="GO:0010025">
    <property type="term" value="P:wax biosynthetic process"/>
    <property type="evidence" value="ECO:0000250"/>
    <property type="project" value="UniProtKB"/>
</dbReference>
<dbReference type="CDD" id="cd05236">
    <property type="entry name" value="FAR-N_SDR_e"/>
    <property type="match status" value="1"/>
</dbReference>
<dbReference type="CDD" id="cd09071">
    <property type="entry name" value="FAR_C"/>
    <property type="match status" value="1"/>
</dbReference>
<dbReference type="FunFam" id="3.40.50.720:FF:000123">
    <property type="entry name" value="Fatty acyl-CoA reductase"/>
    <property type="match status" value="1"/>
</dbReference>
<dbReference type="Gene3D" id="3.40.50.720">
    <property type="entry name" value="NAD(P)-binding Rossmann-like Domain"/>
    <property type="match status" value="1"/>
</dbReference>
<dbReference type="InterPro" id="IPR026055">
    <property type="entry name" value="FAR"/>
</dbReference>
<dbReference type="InterPro" id="IPR033640">
    <property type="entry name" value="FAR_C"/>
</dbReference>
<dbReference type="InterPro" id="IPR013120">
    <property type="entry name" value="Far_NAD-bd"/>
</dbReference>
<dbReference type="InterPro" id="IPR036291">
    <property type="entry name" value="NAD(P)-bd_dom_sf"/>
</dbReference>
<dbReference type="PANTHER" id="PTHR11011:SF119">
    <property type="entry name" value="FATTY ACYL-COA REDUCTASE 1"/>
    <property type="match status" value="1"/>
</dbReference>
<dbReference type="PANTHER" id="PTHR11011">
    <property type="entry name" value="MALE STERILITY PROTEIN 2-RELATED"/>
    <property type="match status" value="1"/>
</dbReference>
<dbReference type="Pfam" id="PF07993">
    <property type="entry name" value="NAD_binding_4"/>
    <property type="match status" value="1"/>
</dbReference>
<dbReference type="Pfam" id="PF03015">
    <property type="entry name" value="Sterile"/>
    <property type="match status" value="1"/>
</dbReference>
<dbReference type="SUPFAM" id="SSF51735">
    <property type="entry name" value="NAD(P)-binding Rossmann-fold domains"/>
    <property type="match status" value="1"/>
</dbReference>
<proteinExistence type="evidence at transcript level"/>
<protein>
    <recommendedName>
        <fullName evidence="1">Fatty acyl-CoA reductase 1</fullName>
        <shortName>Far1</shortName>
        <ecNumber evidence="1">1.2.1.84</ecNumber>
    </recommendedName>
</protein>
<keyword id="KW-0444">Lipid biosynthesis</keyword>
<keyword id="KW-0443">Lipid metabolism</keyword>
<keyword id="KW-0472">Membrane</keyword>
<keyword id="KW-0521">NADP</keyword>
<keyword id="KW-0560">Oxidoreductase</keyword>
<keyword id="KW-0576">Peroxisome</keyword>
<keyword id="KW-1185">Reference proteome</keyword>
<keyword id="KW-0812">Transmembrane</keyword>
<keyword id="KW-1133">Transmembrane helix</keyword>
<gene>
    <name type="primary">far1</name>
</gene>
<accession>Q7ZXF5</accession>